<protein>
    <recommendedName>
        <fullName>Ubiquitin carboxyl-terminal hydrolase 17-like protein 24</fullName>
        <ecNumber>3.4.19.12</ecNumber>
    </recommendedName>
    <alternativeName>
        <fullName>Deubiquitinating enzyme 17</fullName>
    </alternativeName>
    <alternativeName>
        <fullName>Ubiquitin thioesterase 17</fullName>
    </alternativeName>
    <alternativeName>
        <fullName>Ubiquitin-specific-processing protease 17</fullName>
    </alternativeName>
</protein>
<organism>
    <name type="scientific">Homo sapiens</name>
    <name type="common">Human</name>
    <dbReference type="NCBI Taxonomy" id="9606"/>
    <lineage>
        <taxon>Eukaryota</taxon>
        <taxon>Metazoa</taxon>
        <taxon>Chordata</taxon>
        <taxon>Craniata</taxon>
        <taxon>Vertebrata</taxon>
        <taxon>Euteleostomi</taxon>
        <taxon>Mammalia</taxon>
        <taxon>Eutheria</taxon>
        <taxon>Euarchontoglires</taxon>
        <taxon>Primates</taxon>
        <taxon>Haplorrhini</taxon>
        <taxon>Catarrhini</taxon>
        <taxon>Hominidae</taxon>
        <taxon>Homo</taxon>
    </lineage>
</organism>
<accession>Q0WX57</accession>
<accession>A8MRA9</accession>
<accession>Q0WX56</accession>
<accession>Q3BEM1</accession>
<sequence>MEDDSLYLRGEWQFNHFSKLTSSRPDAAFAEIQRTSLPEKSPLSCETRVDLCDDLAPVARQLAPREKLPLSSRRPAAVGAGLQNMGNTCYVNASLQCLTYTPPLANYMLSREHSQTCHRHKGCMLCTMQAHITRALHNPGHVIQPSQALAAGFHRGKQEDAHEFLMFTVDAMKKACLPGHKQVDHHSKDTTLIHQIFGGYWRSQIKCLHCHGISDTFDPYLDIALDIQAAQSVQQALEQLVKPEELNGENAYHCGVCLQRAPASKTLTLHTSAKVLILVLKRFSDVTGNKIAKNVQYPECLDMQPYMSQPNTGPLVYVLYAVLVHAGWSCHNGHYFSYVKAQEGQWYKMDDAEVTASSITSVLSQQAYVLFYIQKSEWERHSESVSRGREPRALGAEDTDRRATQGELKRDHPCLQAPELDEHLVERATQESTLDHWKFLQEQNKTKPEFNVRKVEGTLPPDVLVIHQSKYKCGMKNHHPEQQSSLLNLSSSTPTHQESMNTGTLASLRGRARRSKGKNKHSKRALLVCQ</sequence>
<reference key="1">
    <citation type="journal article" date="2000" name="Genomics">
        <title>The RS447 human megasatellite tandem repetitive sequence encodes a novel deubiquitinating enzyme with a functional promoter.</title>
        <authorList>
            <person name="Saitoh Y."/>
            <person name="Miyamoto N."/>
            <person name="Okada T."/>
            <person name="Gondo Y."/>
            <person name="Showguchi-Miyata J."/>
            <person name="Hadano S."/>
            <person name="Ikeda J.-E."/>
        </authorList>
    </citation>
    <scope>NUCLEOTIDE SEQUENCE [MRNA]</scope>
    <scope>FUNCTION</scope>
    <scope>CATALYTIC ACTIVITY</scope>
    <scope>TISSUE SPECIFICITY</scope>
    <scope>MUTAGENESIS OF CYS-89</scope>
</reference>
<reference key="2">
    <citation type="journal article" date="2006" name="BMC Genomics">
        <title>Hyaluronan- and RNA-binding deubiquitinating enzymes of USP17 family members associated with cell viability.</title>
        <authorList>
            <person name="Shin J.-M."/>
            <person name="Yoo K.-J."/>
            <person name="Kim M.-S."/>
            <person name="Kim D."/>
            <person name="Baek K.-H."/>
        </authorList>
    </citation>
    <scope>NUCLEOTIDE SEQUENCE [MRNA]</scope>
    <scope>NOMENCLATURE</scope>
    <scope>SUBCELLULAR LOCATION</scope>
    <scope>CATALYTIC ACTIVITY</scope>
    <scope>MUTAGENESIS OF CYS-89</scope>
</reference>
<reference key="3">
    <citation type="journal article" date="2005" name="Nature">
        <title>Generation and annotation of the DNA sequences of human chromosomes 2 and 4.</title>
        <authorList>
            <person name="Hillier L.W."/>
            <person name="Graves T.A."/>
            <person name="Fulton R.S."/>
            <person name="Fulton L.A."/>
            <person name="Pepin K.H."/>
            <person name="Minx P."/>
            <person name="Wagner-McPherson C."/>
            <person name="Layman D."/>
            <person name="Wylie K."/>
            <person name="Sekhon M."/>
            <person name="Becker M.C."/>
            <person name="Fewell G.A."/>
            <person name="Delehaunty K.D."/>
            <person name="Miner T.L."/>
            <person name="Nash W.E."/>
            <person name="Kremitzki C."/>
            <person name="Oddy L."/>
            <person name="Du H."/>
            <person name="Sun H."/>
            <person name="Bradshaw-Cordum H."/>
            <person name="Ali J."/>
            <person name="Carter J."/>
            <person name="Cordes M."/>
            <person name="Harris A."/>
            <person name="Isak A."/>
            <person name="van Brunt A."/>
            <person name="Nguyen C."/>
            <person name="Du F."/>
            <person name="Courtney L."/>
            <person name="Kalicki J."/>
            <person name="Ozersky P."/>
            <person name="Abbott S."/>
            <person name="Armstrong J."/>
            <person name="Belter E.A."/>
            <person name="Caruso L."/>
            <person name="Cedroni M."/>
            <person name="Cotton M."/>
            <person name="Davidson T."/>
            <person name="Desai A."/>
            <person name="Elliott G."/>
            <person name="Erb T."/>
            <person name="Fronick C."/>
            <person name="Gaige T."/>
            <person name="Haakenson W."/>
            <person name="Haglund K."/>
            <person name="Holmes A."/>
            <person name="Harkins R."/>
            <person name="Kim K."/>
            <person name="Kruchowski S.S."/>
            <person name="Strong C.M."/>
            <person name="Grewal N."/>
            <person name="Goyea E."/>
            <person name="Hou S."/>
            <person name="Levy A."/>
            <person name="Martinka S."/>
            <person name="Mead K."/>
            <person name="McLellan M.D."/>
            <person name="Meyer R."/>
            <person name="Randall-Maher J."/>
            <person name="Tomlinson C."/>
            <person name="Dauphin-Kohlberg S."/>
            <person name="Kozlowicz-Reilly A."/>
            <person name="Shah N."/>
            <person name="Swearengen-Shahid S."/>
            <person name="Snider J."/>
            <person name="Strong J.T."/>
            <person name="Thompson J."/>
            <person name="Yoakum M."/>
            <person name="Leonard S."/>
            <person name="Pearman C."/>
            <person name="Trani L."/>
            <person name="Radionenko M."/>
            <person name="Waligorski J.E."/>
            <person name="Wang C."/>
            <person name="Rock S.M."/>
            <person name="Tin-Wollam A.-M."/>
            <person name="Maupin R."/>
            <person name="Latreille P."/>
            <person name="Wendl M.C."/>
            <person name="Yang S.-P."/>
            <person name="Pohl C."/>
            <person name="Wallis J.W."/>
            <person name="Spieth J."/>
            <person name="Bieri T.A."/>
            <person name="Berkowicz N."/>
            <person name="Nelson J.O."/>
            <person name="Osborne J."/>
            <person name="Ding L."/>
            <person name="Meyer R."/>
            <person name="Sabo A."/>
            <person name="Shotland Y."/>
            <person name="Sinha P."/>
            <person name="Wohldmann P.E."/>
            <person name="Cook L.L."/>
            <person name="Hickenbotham M.T."/>
            <person name="Eldred J."/>
            <person name="Williams D."/>
            <person name="Jones T.A."/>
            <person name="She X."/>
            <person name="Ciccarelli F.D."/>
            <person name="Izaurralde E."/>
            <person name="Taylor J."/>
            <person name="Schmutz J."/>
            <person name="Myers R.M."/>
            <person name="Cox D.R."/>
            <person name="Huang X."/>
            <person name="McPherson J.D."/>
            <person name="Mardis E.R."/>
            <person name="Clifton S.W."/>
            <person name="Warren W.C."/>
            <person name="Chinwalla A.T."/>
            <person name="Eddy S.R."/>
            <person name="Marra M.A."/>
            <person name="Ovcharenko I."/>
            <person name="Furey T.S."/>
            <person name="Miller W."/>
            <person name="Eichler E.E."/>
            <person name="Bork P."/>
            <person name="Suyama M."/>
            <person name="Torrents D."/>
            <person name="Waterston R.H."/>
            <person name="Wilson R.K."/>
        </authorList>
    </citation>
    <scope>NUCLEOTIDE SEQUENCE [LARGE SCALE GENOMIC DNA]</scope>
</reference>
<reference key="4">
    <citation type="journal article" date="2002" name="Hum. Genet.">
        <title>Unstable transmission of the RS447 human megasatellite tandem repetitive sequence that contains the USP17 deubiquitinating enzyme gene.</title>
        <authorList>
            <person name="Okada T."/>
            <person name="Gondo Y."/>
            <person name="Goto J."/>
            <person name="Kanazawa I."/>
            <person name="Hadano S."/>
            <person name="Ikeda J.E."/>
        </authorList>
    </citation>
    <scope>IDENTIFICATION</scope>
</reference>
<reference key="5">
    <citation type="journal article" date="2005" name="Genomics">
        <title>The DUB/USP17 deubiquitinating enzymes, a multigene family within a tandemly repeated sequence.</title>
        <authorList>
            <person name="Burrows J.F."/>
            <person name="McGrattan M.J."/>
            <person name="Johnston J.A."/>
        </authorList>
    </citation>
    <scope>IDENTIFICATION</scope>
    <scope>NOMENCLATURE</scope>
</reference>
<reference key="6">
    <citation type="journal article" date="2010" name="BMC Genomics">
        <title>The DUB/USP17 deubiquitinating enzymes: a gene family within a tandemly repeated sequence, is also embedded within the copy number variable beta-defensin cluster.</title>
        <authorList>
            <person name="Burrows J.F."/>
            <person name="Scott C.J."/>
            <person name="Johnston J.A."/>
        </authorList>
    </citation>
    <scope>IDENTIFICATION</scope>
</reference>
<gene>
    <name type="primary">USP17L24</name>
    <name type="synonym">USP17</name>
    <name type="synonym">USP17H</name>
    <name type="synonym">USP17I</name>
    <name type="synonym">USP17J</name>
    <name type="synonym">USP17K</name>
    <name type="synonym">USP17L</name>
    <name type="synonym">USP17M</name>
</gene>
<gene>
    <name type="primary">USP17L25</name>
</gene>
<gene>
    <name type="primary">USP17L26</name>
</gene>
<gene>
    <name type="primary">USP17L27</name>
</gene>
<gene>
    <name type="primary">USP17L28</name>
</gene>
<gene>
    <name type="primary">USP17L29</name>
</gene>
<gene>
    <name type="primary">USP17L30</name>
</gene>
<proteinExistence type="evidence at protein level"/>
<keyword id="KW-0053">Apoptosis</keyword>
<keyword id="KW-0256">Endoplasmic reticulum</keyword>
<keyword id="KW-0378">Hydrolase</keyword>
<keyword id="KW-0539">Nucleus</keyword>
<keyword id="KW-0645">Protease</keyword>
<keyword id="KW-1185">Reference proteome</keyword>
<keyword id="KW-0788">Thiol protease</keyword>
<keyword id="KW-0833">Ubl conjugation pathway</keyword>
<name>U17LO_HUMAN</name>
<feature type="chain" id="PRO_0000331643" description="Ubiquitin carboxyl-terminal hydrolase 17-like protein 24">
    <location>
        <begin position="1"/>
        <end position="530"/>
    </location>
</feature>
<feature type="domain" description="USP">
    <location>
        <begin position="80"/>
        <end position="375"/>
    </location>
</feature>
<feature type="region of interest" description="Disordered" evidence="4">
    <location>
        <begin position="382"/>
        <end position="412"/>
    </location>
</feature>
<feature type="region of interest" description="Disordered" evidence="4">
    <location>
        <begin position="477"/>
        <end position="530"/>
    </location>
</feature>
<feature type="compositionally biased region" description="Basic and acidic residues" evidence="4">
    <location>
        <begin position="382"/>
        <end position="392"/>
    </location>
</feature>
<feature type="compositionally biased region" description="Basic and acidic residues" evidence="4">
    <location>
        <begin position="398"/>
        <end position="412"/>
    </location>
</feature>
<feature type="compositionally biased region" description="Polar residues" evidence="4">
    <location>
        <begin position="493"/>
        <end position="505"/>
    </location>
</feature>
<feature type="compositionally biased region" description="Basic residues" evidence="4">
    <location>
        <begin position="510"/>
        <end position="524"/>
    </location>
</feature>
<feature type="active site" description="Nucleophile">
    <location>
        <position position="89"/>
    </location>
</feature>
<feature type="active site" description="Proton acceptor" evidence="2 3">
    <location>
        <position position="334"/>
    </location>
</feature>
<feature type="mutagenesis site" description="Abolishes enzymatic activity. Loss of the pro-apoptotic function." evidence="5 6">
    <original>C</original>
    <variation>S</variation>
    <location>
        <position position="89"/>
    </location>
</feature>
<feature type="sequence conflict" description="In Ref. 2; AAO38845/AAQ11741/AAQ11742." evidence="7" ref="2">
    <original>R</original>
    <variation>G</variation>
    <location>
        <position position="9"/>
    </location>
</feature>
<feature type="sequence conflict" description="In Ref. 2; AAQ11742." evidence="7" ref="2">
    <original>S</original>
    <variation>P</variation>
    <location>
        <position position="23"/>
    </location>
</feature>
<feature type="sequence conflict" description="In Ref. 2; AAQ11741." evidence="7" ref="2">
    <original>P</original>
    <variation>S</variation>
    <location>
        <position position="262"/>
    </location>
</feature>
<feature type="sequence conflict" description="In Ref. 2; AAQ11741/AAQ11742." evidence="7" ref="2">
    <original>P</original>
    <variation>Q</variation>
    <location>
        <position position="310"/>
    </location>
</feature>
<feature type="sequence conflict" description="In Ref. 2; AAO38845." evidence="7" ref="2">
    <original>T</original>
    <variation>I</variation>
    <location>
        <position position="360"/>
    </location>
</feature>
<feature type="sequence conflict" description="In Ref. 2; AAQ11742." evidence="7" ref="2">
    <original>S</original>
    <variation>P</variation>
    <location>
        <position position="361"/>
    </location>
</feature>
<feature type="sequence conflict" description="In Ref. 2; AAQ11742." evidence="7" ref="2">
    <original>S</original>
    <variation>T</variation>
    <location>
        <position position="364"/>
    </location>
</feature>
<feature type="sequence conflict" description="In Ref. 2; AAO38845." evidence="7" ref="2">
    <original>R</original>
    <variation>S</variation>
    <location>
        <position position="392"/>
    </location>
</feature>
<feature type="sequence conflict" description="In Ref. 2; AAQ11742." evidence="7" ref="2">
    <original>D</original>
    <variation>A</variation>
    <location>
        <position position="398"/>
    </location>
</feature>
<feature type="sequence conflict" description="In Ref. 2; AAQ11742." evidence="7" ref="2">
    <original>Q</original>
    <variation>H</variation>
    <location>
        <position position="430"/>
    </location>
</feature>
<feature type="sequence conflict" description="In Ref. 2; AAO38845/AAQ11741/AAQ11742." evidence="7" ref="2">
    <original>S</original>
    <variation>T</variation>
    <location>
        <position position="492"/>
    </location>
</feature>
<feature type="sequence conflict" description="In Ref. 2; AAQ11742." evidence="7" ref="2">
    <original>R</original>
    <variation>G</variation>
    <location>
        <position position="511"/>
    </location>
</feature>
<evidence type="ECO:0000250" key="1"/>
<evidence type="ECO:0000255" key="2">
    <source>
        <dbReference type="PROSITE-ProRule" id="PRU10092"/>
    </source>
</evidence>
<evidence type="ECO:0000255" key="3">
    <source>
        <dbReference type="PROSITE-ProRule" id="PRU10093"/>
    </source>
</evidence>
<evidence type="ECO:0000256" key="4">
    <source>
        <dbReference type="SAM" id="MobiDB-lite"/>
    </source>
</evidence>
<evidence type="ECO:0000269" key="5">
    <source>
    </source>
</evidence>
<evidence type="ECO:0000269" key="6">
    <source>
    </source>
</evidence>
<evidence type="ECO:0000305" key="7"/>
<dbReference type="EC" id="3.4.19.12"/>
<dbReference type="EMBL" id="AF544011">
    <property type="protein sequence ID" value="AAQ11741.1"/>
    <property type="molecule type" value="mRNA"/>
</dbReference>
<dbReference type="EMBL" id="AF544012">
    <property type="protein sequence ID" value="AAQ11742.1"/>
    <property type="molecule type" value="mRNA"/>
</dbReference>
<dbReference type="EMBL" id="AY188990">
    <property type="protein sequence ID" value="AAO38845.1"/>
    <property type="molecule type" value="mRNA"/>
</dbReference>
<dbReference type="EMBL" id="AC116655">
    <property type="status" value="NOT_ANNOTATED_CDS"/>
    <property type="molecule type" value="Genomic_DNA"/>
</dbReference>
<dbReference type="CCDS" id="CCDS59464.1"/>
<dbReference type="RefSeq" id="NP_001229255.1">
    <property type="nucleotide sequence ID" value="NM_001242326.1"/>
</dbReference>
<dbReference type="RefSeq" id="NP_001229256.1">
    <property type="nucleotide sequence ID" value="NM_001242327.1"/>
</dbReference>
<dbReference type="RefSeq" id="NP_001229257.1">
    <property type="nucleotide sequence ID" value="NM_001242328.1"/>
</dbReference>
<dbReference type="RefSeq" id="NP_001229259.1">
    <property type="nucleotide sequence ID" value="NM_001242330.1"/>
</dbReference>
<dbReference type="RefSeq" id="NP_001229260.1">
    <property type="nucleotide sequence ID" value="NM_001242331.1"/>
</dbReference>
<dbReference type="RefSeq" id="NP_001229261.1">
    <property type="nucleotide sequence ID" value="NM_001242332.1"/>
</dbReference>
<dbReference type="RefSeq" id="NP_001243796.1">
    <property type="nucleotide sequence ID" value="NM_001256867.1"/>
</dbReference>
<dbReference type="SMR" id="Q0WX57"/>
<dbReference type="BioGRID" id="608797">
    <property type="interactions" value="1"/>
</dbReference>
<dbReference type="BioGRID" id="608820">
    <property type="interactions" value="2"/>
</dbReference>
<dbReference type="BioGRID" id="608827">
    <property type="interactions" value="1"/>
</dbReference>
<dbReference type="BioGRID" id="608832">
    <property type="interactions" value="2"/>
</dbReference>
<dbReference type="FunCoup" id="Q0WX57">
    <property type="interactions" value="84"/>
</dbReference>
<dbReference type="IntAct" id="Q0WX57">
    <property type="interactions" value="7"/>
</dbReference>
<dbReference type="STRING" id="9606.ENSP00000422097"/>
<dbReference type="ChEMBL" id="CHEMBL4523281"/>
<dbReference type="MEROPS" id="C19.023"/>
<dbReference type="MEROPS" id="C19.078"/>
<dbReference type="iPTMnet" id="Q0WX57"/>
<dbReference type="PhosphoSitePlus" id="Q0WX57"/>
<dbReference type="BioMuta" id="USP17L25"/>
<dbReference type="DMDM" id="187663978"/>
<dbReference type="jPOST" id="Q0WX57"/>
<dbReference type="MassIVE" id="Q0WX57"/>
<dbReference type="PaxDb" id="9606-ENSP00000422097"/>
<dbReference type="PeptideAtlas" id="Q0WX57"/>
<dbReference type="Antibodypedia" id="64154">
    <property type="antibodies" value="41 antibodies from 9 providers"/>
</dbReference>
<dbReference type="Antibodypedia" id="76737">
    <property type="antibodies" value="1 antibodies from 1 providers"/>
</dbReference>
<dbReference type="Antibodypedia" id="76742">
    <property type="antibodies" value="2 antibodies from 1 providers"/>
</dbReference>
<dbReference type="DNASU" id="728419"/>
<dbReference type="Ensembl" id="ENST00000504104.1">
    <property type="protein sequence ID" value="ENSP00000422887.1"/>
    <property type="gene ID" value="ENSG00000228856.3"/>
</dbReference>
<dbReference type="Ensembl" id="ENST00000504481.1">
    <property type="protein sequence ID" value="ENSP00000425375.1"/>
    <property type="gene ID" value="ENSG00000232264.5"/>
</dbReference>
<dbReference type="Ensembl" id="ENST00000504543.1">
    <property type="protein sequence ID" value="ENSP00000423777.1"/>
    <property type="gene ID" value="ENSG00000231051.3"/>
</dbReference>
<dbReference type="Ensembl" id="ENST00000509271.1">
    <property type="protein sequence ID" value="ENSP00000422097.1"/>
    <property type="gene ID" value="ENSG00000230430.5"/>
</dbReference>
<dbReference type="Ensembl" id="ENST00000509660.1">
    <property type="protein sequence ID" value="ENSP00000427366.1"/>
    <property type="gene ID" value="ENSG00000229579.5"/>
</dbReference>
<dbReference type="Ensembl" id="ENST00000511681.1">
    <property type="protein sequence ID" value="ENSP00000422969.1"/>
    <property type="gene ID" value="ENSG00000231637.3"/>
</dbReference>
<dbReference type="Ensembl" id="ENST00000515574.1">
    <property type="protein sequence ID" value="ENSP00000423211.1"/>
    <property type="gene ID" value="ENSG00000235780.3"/>
</dbReference>
<dbReference type="GeneID" id="728369"/>
<dbReference type="GeneID" id="728373"/>
<dbReference type="GeneID" id="728379"/>
<dbReference type="GeneID" id="728393"/>
<dbReference type="GeneID" id="728400"/>
<dbReference type="GeneID" id="728405"/>
<dbReference type="GeneID" id="728419"/>
<dbReference type="KEGG" id="hsa:728369"/>
<dbReference type="KEGG" id="hsa:728373"/>
<dbReference type="KEGG" id="hsa:728379"/>
<dbReference type="KEGG" id="hsa:728393"/>
<dbReference type="KEGG" id="hsa:728400"/>
<dbReference type="KEGG" id="hsa:728405"/>
<dbReference type="KEGG" id="hsa:728419"/>
<dbReference type="MANE-Select" id="ENST00000504104.1">
    <property type="protein sequence ID" value="ENSP00000422887.1"/>
    <property type="RefSeq nucleotide sequence ID" value="NM_001256867.1"/>
    <property type="RefSeq protein sequence ID" value="NP_001243796.1"/>
</dbReference>
<dbReference type="MANE-Select" id="ENST00000504481.1">
    <property type="protein sequence ID" value="ENSP00000425375.1"/>
    <property type="RefSeq nucleotide sequence ID" value="NM_001242327.1"/>
    <property type="RefSeq protein sequence ID" value="NP_001229256.1"/>
</dbReference>
<dbReference type="MANE-Select" id="ENST00000504543.1">
    <property type="protein sequence ID" value="ENSP00000423777.1"/>
    <property type="RefSeq nucleotide sequence ID" value="NM_001242331.1"/>
    <property type="RefSeq protein sequence ID" value="NP_001229260.1"/>
</dbReference>
<dbReference type="MANE-Select" id="ENST00000509271.1">
    <property type="protein sequence ID" value="ENSP00000422097.1"/>
    <property type="RefSeq nucleotide sequence ID" value="NM_001242326.1"/>
    <property type="RefSeq protein sequence ID" value="NP_001229255.1"/>
</dbReference>
<dbReference type="MANE-Select" id="ENST00000509660.1">
    <property type="protein sequence ID" value="ENSP00000427366.1"/>
    <property type="RefSeq nucleotide sequence ID" value="NM_001242328.1"/>
    <property type="RefSeq protein sequence ID" value="NP_001229257.1"/>
</dbReference>
<dbReference type="MANE-Select" id="ENST00000511681.1">
    <property type="protein sequence ID" value="ENSP00000422969.1"/>
    <property type="RefSeq nucleotide sequence ID" value="NM_001242332.1"/>
    <property type="RefSeq protein sequence ID" value="NP_001229261.1"/>
</dbReference>
<dbReference type="MANE-Select" id="ENST00000515574.1">
    <property type="protein sequence ID" value="ENSP00000423211.1"/>
    <property type="RefSeq nucleotide sequence ID" value="NM_001242330.1"/>
    <property type="RefSeq protein sequence ID" value="NP_001229259.1"/>
</dbReference>
<dbReference type="UCSC" id="uc021xll.1">
    <property type="organism name" value="human"/>
</dbReference>
<dbReference type="AGR" id="HGNC:44452"/>
<dbReference type="AGR" id="HGNC:44453"/>
<dbReference type="AGR" id="HGNC:44454"/>
<dbReference type="AGR" id="HGNC:44455"/>
<dbReference type="AGR" id="HGNC:44456"/>
<dbReference type="AGR" id="HGNC:44457"/>
<dbReference type="AGR" id="HGNC:44458"/>
<dbReference type="CTD" id="728369"/>
<dbReference type="CTD" id="728373"/>
<dbReference type="CTD" id="728379"/>
<dbReference type="CTD" id="728393"/>
<dbReference type="CTD" id="728400"/>
<dbReference type="CTD" id="728405"/>
<dbReference type="CTD" id="728419"/>
<dbReference type="GeneCards" id="USP17L24"/>
<dbReference type="GeneCards" id="USP17L25"/>
<dbReference type="GeneCards" id="USP17L26"/>
<dbReference type="GeneCards" id="USP17L27"/>
<dbReference type="GeneCards" id="USP17L28"/>
<dbReference type="GeneCards" id="USP17L29"/>
<dbReference type="GeneCards" id="USP17L30"/>
<dbReference type="HGNC" id="HGNC:44453">
    <property type="gene designation" value="USP17L24"/>
</dbReference>
<dbReference type="HGNC" id="HGNC:44452">
    <property type="gene designation" value="USP17L25"/>
</dbReference>
<dbReference type="HGNC" id="HGNC:44454">
    <property type="gene designation" value="USP17L26"/>
</dbReference>
<dbReference type="HGNC" id="HGNC:44455">
    <property type="gene designation" value="USP17L27"/>
</dbReference>
<dbReference type="HGNC" id="HGNC:44456">
    <property type="gene designation" value="USP17L28"/>
</dbReference>
<dbReference type="HGNC" id="HGNC:44457">
    <property type="gene designation" value="USP17L29"/>
</dbReference>
<dbReference type="HGNC" id="HGNC:44458">
    <property type="gene designation" value="USP17L30"/>
</dbReference>
<dbReference type="HPA" id="ENSG00000228856">
    <property type="expression patterns" value="Not detected"/>
</dbReference>
<dbReference type="HPA" id="ENSG00000229579">
    <property type="expression patterns" value="Not detected"/>
</dbReference>
<dbReference type="HPA" id="ENSG00000230430">
    <property type="expression patterns" value="Not detected"/>
</dbReference>
<dbReference type="HPA" id="ENSG00000231051">
    <property type="expression patterns" value="Not detected"/>
</dbReference>
<dbReference type="HPA" id="ENSG00000231637">
    <property type="expression patterns" value="Not detected"/>
</dbReference>
<dbReference type="HPA" id="ENSG00000232264">
    <property type="expression patterns" value="Not detected"/>
</dbReference>
<dbReference type="HPA" id="ENSG00000235780">
    <property type="expression patterns" value="Not detected"/>
</dbReference>
<dbReference type="MIM" id="607011">
    <property type="type" value="gene"/>
</dbReference>
<dbReference type="neXtProt" id="NX_Q0WX57"/>
<dbReference type="OpenTargets" id="ENSG00000228856"/>
<dbReference type="VEuPathDB" id="HostDB:ENSG00000228856"/>
<dbReference type="VEuPathDB" id="HostDB:ENSG00000229579"/>
<dbReference type="VEuPathDB" id="HostDB:ENSG00000230430"/>
<dbReference type="VEuPathDB" id="HostDB:ENSG00000231051"/>
<dbReference type="VEuPathDB" id="HostDB:ENSG00000231637"/>
<dbReference type="VEuPathDB" id="HostDB:ENSG00000232264"/>
<dbReference type="VEuPathDB" id="HostDB:ENSG00000235780"/>
<dbReference type="eggNOG" id="KOG1865">
    <property type="taxonomic scope" value="Eukaryota"/>
</dbReference>
<dbReference type="GeneTree" id="ENSGT00940000161948"/>
<dbReference type="HOGENOM" id="CLU_008279_10_0_1"/>
<dbReference type="InParanoid" id="Q0WX57"/>
<dbReference type="OMA" id="CSQGGRC"/>
<dbReference type="OrthoDB" id="8832at9604"/>
<dbReference type="PAN-GO" id="Q0WX57">
    <property type="GO annotations" value="6 GO annotations based on evolutionary models"/>
</dbReference>
<dbReference type="PhylomeDB" id="Q0WX57"/>
<dbReference type="PathwayCommons" id="Q0WX57"/>
<dbReference type="Reactome" id="R-HSA-5689880">
    <property type="pathway name" value="Ub-specific processing proteases"/>
</dbReference>
<dbReference type="SignaLink" id="Q0WX57"/>
<dbReference type="BioGRID-ORCS" id="728369">
    <property type="hits" value="10 hits in 182 CRISPR screens"/>
</dbReference>
<dbReference type="BioGRID-ORCS" id="728373">
    <property type="hits" value="17 hits in 153 CRISPR screens"/>
</dbReference>
<dbReference type="BioGRID-ORCS" id="728379">
    <property type="hits" value="12 hits in 169 CRISPR screens"/>
</dbReference>
<dbReference type="BioGRID-ORCS" id="728393">
    <property type="hits" value="13 hits in 133 CRISPR screens"/>
</dbReference>
<dbReference type="BioGRID-ORCS" id="728400">
    <property type="hits" value="14 hits in 478 CRISPR screens"/>
</dbReference>
<dbReference type="BioGRID-ORCS" id="728405">
    <property type="hits" value="17 hits in 175 CRISPR screens"/>
</dbReference>
<dbReference type="BioGRID-ORCS" id="728419">
    <property type="hits" value="10 hits in 131 CRISPR screens"/>
</dbReference>
<dbReference type="CD-CODE" id="91857CE7">
    <property type="entry name" value="Nucleolus"/>
</dbReference>
<dbReference type="Pharos" id="Q0WX57">
    <property type="development level" value="Tbio"/>
</dbReference>
<dbReference type="PRO" id="PR:Q0WX57"/>
<dbReference type="Proteomes" id="UP000005640">
    <property type="component" value="Chromosome 4"/>
</dbReference>
<dbReference type="RNAct" id="Q0WX57">
    <property type="molecule type" value="protein"/>
</dbReference>
<dbReference type="GO" id="GO:0005829">
    <property type="term" value="C:cytosol"/>
    <property type="evidence" value="ECO:0000318"/>
    <property type="project" value="GO_Central"/>
</dbReference>
<dbReference type="GO" id="GO:0005783">
    <property type="term" value="C:endoplasmic reticulum"/>
    <property type="evidence" value="ECO:0007669"/>
    <property type="project" value="UniProtKB-SubCell"/>
</dbReference>
<dbReference type="GO" id="GO:0005730">
    <property type="term" value="C:nucleolus"/>
    <property type="evidence" value="ECO:0000314"/>
    <property type="project" value="UniProtKB"/>
</dbReference>
<dbReference type="GO" id="GO:0005634">
    <property type="term" value="C:nucleus"/>
    <property type="evidence" value="ECO:0000314"/>
    <property type="project" value="UniProtKB"/>
</dbReference>
<dbReference type="GO" id="GO:0004843">
    <property type="term" value="F:cysteine-type deubiquitinase activity"/>
    <property type="evidence" value="ECO:0000315"/>
    <property type="project" value="UniProtKB"/>
</dbReference>
<dbReference type="GO" id="GO:0005540">
    <property type="term" value="F:hyaluronic acid binding"/>
    <property type="evidence" value="ECO:0000314"/>
    <property type="project" value="UniProtKB"/>
</dbReference>
<dbReference type="GO" id="GO:0003723">
    <property type="term" value="F:RNA binding"/>
    <property type="evidence" value="ECO:0000314"/>
    <property type="project" value="UniProtKB"/>
</dbReference>
<dbReference type="GO" id="GO:0006915">
    <property type="term" value="P:apoptotic process"/>
    <property type="evidence" value="ECO:0007669"/>
    <property type="project" value="UniProtKB-KW"/>
</dbReference>
<dbReference type="GO" id="GO:1904037">
    <property type="term" value="P:positive regulation of epithelial cell apoptotic process"/>
    <property type="evidence" value="ECO:0000315"/>
    <property type="project" value="UniProtKB"/>
</dbReference>
<dbReference type="GO" id="GO:0071947">
    <property type="term" value="P:protein deubiquitination involved in ubiquitin-dependent protein catabolic process"/>
    <property type="evidence" value="ECO:0000315"/>
    <property type="project" value="UniProtKB"/>
</dbReference>
<dbReference type="GO" id="GO:0042981">
    <property type="term" value="P:regulation of apoptotic process"/>
    <property type="evidence" value="ECO:0000318"/>
    <property type="project" value="GO_Central"/>
</dbReference>
<dbReference type="GO" id="GO:0031647">
    <property type="term" value="P:regulation of protein stability"/>
    <property type="evidence" value="ECO:0000318"/>
    <property type="project" value="GO_Central"/>
</dbReference>
<dbReference type="CDD" id="cd02661">
    <property type="entry name" value="Peptidase_C19E"/>
    <property type="match status" value="1"/>
</dbReference>
<dbReference type="FunFam" id="3.90.70.10:FF:000070">
    <property type="entry name" value="Ubiquitin carboxyl-terminal hydrolase 17-like protein 17"/>
    <property type="match status" value="1"/>
</dbReference>
<dbReference type="Gene3D" id="3.90.70.10">
    <property type="entry name" value="Cysteine proteinases"/>
    <property type="match status" value="1"/>
</dbReference>
<dbReference type="InterPro" id="IPR006861">
    <property type="entry name" value="HABP4_PAIRBP1-bd"/>
</dbReference>
<dbReference type="InterPro" id="IPR038765">
    <property type="entry name" value="Papain-like_cys_pep_sf"/>
</dbReference>
<dbReference type="InterPro" id="IPR050164">
    <property type="entry name" value="Peptidase_C19"/>
</dbReference>
<dbReference type="InterPro" id="IPR001394">
    <property type="entry name" value="Peptidase_C19_UCH"/>
</dbReference>
<dbReference type="InterPro" id="IPR018200">
    <property type="entry name" value="USP_CS"/>
</dbReference>
<dbReference type="InterPro" id="IPR028889">
    <property type="entry name" value="USP_dom"/>
</dbReference>
<dbReference type="PANTHER" id="PTHR24006:SF651">
    <property type="entry name" value="INACTIVE UBIQUITIN CARBOXYL-TERMINAL HYDROLASE 17-LIKE PROTEIN 4-RELATED"/>
    <property type="match status" value="1"/>
</dbReference>
<dbReference type="PANTHER" id="PTHR24006">
    <property type="entry name" value="UBIQUITIN CARBOXYL-TERMINAL HYDROLASE"/>
    <property type="match status" value="1"/>
</dbReference>
<dbReference type="Pfam" id="PF04774">
    <property type="entry name" value="HABP4_PAI-RBP1"/>
    <property type="match status" value="1"/>
</dbReference>
<dbReference type="Pfam" id="PF00443">
    <property type="entry name" value="UCH"/>
    <property type="match status" value="1"/>
</dbReference>
<dbReference type="SUPFAM" id="SSF54001">
    <property type="entry name" value="Cysteine proteinases"/>
    <property type="match status" value="1"/>
</dbReference>
<dbReference type="PROSITE" id="PS00972">
    <property type="entry name" value="USP_1"/>
    <property type="match status" value="1"/>
</dbReference>
<dbReference type="PROSITE" id="PS00973">
    <property type="entry name" value="USP_2"/>
    <property type="match status" value="1"/>
</dbReference>
<dbReference type="PROSITE" id="PS50235">
    <property type="entry name" value="USP_3"/>
    <property type="match status" value="1"/>
</dbReference>
<comment type="function">
    <text evidence="5">Deubiquitinating enzyme that removes conjugated ubiquitin from specific proteins to regulate different cellular processes that may include cell proliferation, progression through the cell cycle, apoptosis, cell migration, and the cellular response to viral infection.</text>
</comment>
<comment type="catalytic activity">
    <reaction evidence="5 6">
        <text>Thiol-dependent hydrolysis of ester, thioester, amide, peptide and isopeptide bonds formed by the C-terminal Gly of ubiquitin (a 76-residue protein attached to proteins as an intracellular targeting signal).</text>
        <dbReference type="EC" id="3.4.19.12"/>
    </reaction>
</comment>
<comment type="subcellular location">
    <subcellularLocation>
        <location evidence="6">Nucleus</location>
        <location evidence="6">Nucleolus</location>
    </subcellularLocation>
    <subcellularLocation>
        <location evidence="1">Endoplasmic reticulum</location>
    </subcellularLocation>
</comment>
<comment type="tissue specificity">
    <text evidence="5">Expressed in heart, brain, liver and skeletal muscle.</text>
</comment>
<comment type="similarity">
    <text evidence="7">Belongs to the peptidase C19 family. USP17 subfamily.</text>
</comment>
<comment type="caution">
    <text evidence="7">The RS447 megasatellite DNA is a highly polymorphic conserved tandem repetitive sequence which contains a copy of the USP17 gene. It is present with an interindividual variation in copy number, ranging from 20 to 103, and can be found in the genome both on chromosome 4 and chromosome 8. The high similarity between the UPS17-like genes makes impossible to clearly assign data to one of the genes of the family. Oligonucleotides designed in RNAi experiments are for instance not specific of a given UPS17-like gene.</text>
</comment>